<gene>
    <name type="primary">lsm14a-a</name>
    <name type="synonym">lsm14a</name>
    <name type="synonym">rap55a-a</name>
</gene>
<name>L14AA_XENLA</name>
<feature type="chain" id="PRO_0000391378" description="Protein LSM14 homolog A-A">
    <location>
        <begin position="1"/>
        <end position="471"/>
    </location>
</feature>
<feature type="domain" description="Sm" evidence="4">
    <location>
        <begin position="1"/>
        <end position="81"/>
    </location>
</feature>
<feature type="domain" description="DFDF" evidence="3">
    <location>
        <begin position="288"/>
        <end position="324"/>
    </location>
</feature>
<feature type="region of interest" description="Disordered" evidence="5">
    <location>
        <begin position="146"/>
        <end position="165"/>
    </location>
</feature>
<feature type="region of interest" description="Disordered" evidence="5">
    <location>
        <begin position="171"/>
        <end position="190"/>
    </location>
</feature>
<feature type="region of interest" description="Disordered" evidence="5">
    <location>
        <begin position="197"/>
        <end position="292"/>
    </location>
</feature>
<feature type="region of interest" description="Disordered" evidence="5">
    <location>
        <begin position="323"/>
        <end position="354"/>
    </location>
</feature>
<feature type="region of interest" description="Disordered" evidence="5">
    <location>
        <begin position="404"/>
        <end position="456"/>
    </location>
</feature>
<feature type="short sequence motif" description="FFD box">
    <location>
        <begin position="363"/>
        <end position="379"/>
    </location>
</feature>
<feature type="short sequence motif" description="TFG box">
    <location>
        <begin position="382"/>
        <end position="402"/>
    </location>
</feature>
<feature type="compositionally biased region" description="Low complexity" evidence="5">
    <location>
        <begin position="150"/>
        <end position="160"/>
    </location>
</feature>
<feature type="compositionally biased region" description="Low complexity" evidence="5">
    <location>
        <begin position="201"/>
        <end position="227"/>
    </location>
</feature>
<feature type="compositionally biased region" description="Basic and acidic residues" evidence="5">
    <location>
        <begin position="233"/>
        <end position="262"/>
    </location>
</feature>
<feature type="compositionally biased region" description="Basic residues" evidence="5">
    <location>
        <begin position="273"/>
        <end position="287"/>
    </location>
</feature>
<feature type="compositionally biased region" description="Basic and acidic residues" evidence="5">
    <location>
        <begin position="323"/>
        <end position="341"/>
    </location>
</feature>
<feature type="compositionally biased region" description="Gly residues" evidence="5">
    <location>
        <begin position="412"/>
        <end position="422"/>
    </location>
</feature>
<feature type="compositionally biased region" description="Gly residues" evidence="5">
    <location>
        <begin position="433"/>
        <end position="452"/>
    </location>
</feature>
<feature type="sequence conflict" description="In Ref. 2; AAH80031." evidence="13" ref="2">
    <original>A</original>
    <variation>V</variation>
    <location>
        <position position="352"/>
    </location>
</feature>
<keyword id="KW-0963">Cytoplasm</keyword>
<keyword id="KW-0217">Developmental protein</keyword>
<keyword id="KW-0597">Phosphoprotein</keyword>
<keyword id="KW-1185">Reference proteome</keyword>
<keyword id="KW-0678">Repressor</keyword>
<keyword id="KW-0687">Ribonucleoprotein</keyword>
<keyword id="KW-0810">Translation regulation</keyword>
<proteinExistence type="evidence at protein level"/>
<dbReference type="EMBL" id="AB257699">
    <property type="protein sequence ID" value="BAF36055.1"/>
    <property type="molecule type" value="mRNA"/>
</dbReference>
<dbReference type="EMBL" id="BC080031">
    <property type="protein sequence ID" value="AAH80031.1"/>
    <property type="molecule type" value="mRNA"/>
</dbReference>
<dbReference type="RefSeq" id="NP_001087507.1">
    <property type="nucleotide sequence ID" value="NM_001094038.1"/>
</dbReference>
<dbReference type="BMRB" id="A0A8M2"/>
<dbReference type="SMR" id="A0A8M2"/>
<dbReference type="BioGRID" id="104191">
    <property type="interactions" value="1"/>
</dbReference>
<dbReference type="IntAct" id="A0A8M2">
    <property type="interactions" value="10"/>
</dbReference>
<dbReference type="MINT" id="A0A8M2"/>
<dbReference type="DNASU" id="447331"/>
<dbReference type="GeneID" id="447331"/>
<dbReference type="KEGG" id="xla:447331"/>
<dbReference type="AGR" id="Xenbase:XB-GENE-5955717"/>
<dbReference type="CTD" id="447331"/>
<dbReference type="Xenbase" id="XB-GENE-5955717">
    <property type="gene designation" value="lsm14a.L"/>
</dbReference>
<dbReference type="OrthoDB" id="21539at2759"/>
<dbReference type="CD-CODE" id="78E86D56">
    <property type="entry name" value="Mitochondrial cloud"/>
</dbReference>
<dbReference type="Proteomes" id="UP000186698">
    <property type="component" value="Chromosome 4L"/>
</dbReference>
<dbReference type="Bgee" id="447331">
    <property type="expression patterns" value="Expressed in blastula and 19 other cell types or tissues"/>
</dbReference>
<dbReference type="GO" id="GO:0005737">
    <property type="term" value="C:cytoplasm"/>
    <property type="evidence" value="ECO:0000314"/>
    <property type="project" value="UniProtKB"/>
</dbReference>
<dbReference type="GO" id="GO:0010494">
    <property type="term" value="C:cytoplasmic stress granule"/>
    <property type="evidence" value="ECO:0007669"/>
    <property type="project" value="UniProtKB-SubCell"/>
</dbReference>
<dbReference type="GO" id="GO:0000932">
    <property type="term" value="C:P-body"/>
    <property type="evidence" value="ECO:0000318"/>
    <property type="project" value="GO_Central"/>
</dbReference>
<dbReference type="GO" id="GO:0032991">
    <property type="term" value="C:protein-containing complex"/>
    <property type="evidence" value="ECO:0000353"/>
    <property type="project" value="UniProtKB"/>
</dbReference>
<dbReference type="GO" id="GO:1990904">
    <property type="term" value="C:ribonucleoprotein complex"/>
    <property type="evidence" value="ECO:0000353"/>
    <property type="project" value="UniProtKB"/>
</dbReference>
<dbReference type="GO" id="GO:0017151">
    <property type="term" value="F:DEAD/H-box RNA helicase binding"/>
    <property type="evidence" value="ECO:0000353"/>
    <property type="project" value="UniProtKB"/>
</dbReference>
<dbReference type="GO" id="GO:0003729">
    <property type="term" value="F:mRNA binding"/>
    <property type="evidence" value="ECO:0000318"/>
    <property type="project" value="GO_Central"/>
</dbReference>
<dbReference type="GO" id="GO:0003723">
    <property type="term" value="F:RNA binding"/>
    <property type="evidence" value="ECO:0000314"/>
    <property type="project" value="UniProtKB"/>
</dbReference>
<dbReference type="GO" id="GO:0017148">
    <property type="term" value="P:negative regulation of translation"/>
    <property type="evidence" value="ECO:0000315"/>
    <property type="project" value="UniProtKB"/>
</dbReference>
<dbReference type="GO" id="GO:0033962">
    <property type="term" value="P:P-body assembly"/>
    <property type="evidence" value="ECO:0000318"/>
    <property type="project" value="GO_Central"/>
</dbReference>
<dbReference type="GO" id="GO:0034063">
    <property type="term" value="P:stress granule assembly"/>
    <property type="evidence" value="ECO:0000318"/>
    <property type="project" value="GO_Central"/>
</dbReference>
<dbReference type="CDD" id="cd01736">
    <property type="entry name" value="LSm14_N"/>
    <property type="match status" value="1"/>
</dbReference>
<dbReference type="FunFam" id="2.30.30.100:FF:000006">
    <property type="entry name" value="Protein LSM14 homolog A isoform b"/>
    <property type="match status" value="1"/>
</dbReference>
<dbReference type="Gene3D" id="2.30.30.100">
    <property type="match status" value="1"/>
</dbReference>
<dbReference type="InterPro" id="IPR025762">
    <property type="entry name" value="DFDF"/>
</dbReference>
<dbReference type="InterPro" id="IPR019050">
    <property type="entry name" value="FDF_dom"/>
</dbReference>
<dbReference type="InterPro" id="IPR025761">
    <property type="entry name" value="FFD_box"/>
</dbReference>
<dbReference type="InterPro" id="IPR025609">
    <property type="entry name" value="Lsm14-like_N"/>
</dbReference>
<dbReference type="InterPro" id="IPR010920">
    <property type="entry name" value="LSM_dom_sf"/>
</dbReference>
<dbReference type="InterPro" id="IPR047575">
    <property type="entry name" value="Sm"/>
</dbReference>
<dbReference type="InterPro" id="IPR025768">
    <property type="entry name" value="TFG_box"/>
</dbReference>
<dbReference type="PANTHER" id="PTHR13586:SF2">
    <property type="entry name" value="PROTEIN LSM14 HOMOLOG A"/>
    <property type="match status" value="1"/>
</dbReference>
<dbReference type="PANTHER" id="PTHR13586">
    <property type="entry name" value="SCD6 PROTEIN-RELATED"/>
    <property type="match status" value="1"/>
</dbReference>
<dbReference type="Pfam" id="PF09532">
    <property type="entry name" value="FDF"/>
    <property type="match status" value="1"/>
</dbReference>
<dbReference type="Pfam" id="PF12701">
    <property type="entry name" value="LSM14"/>
    <property type="match status" value="1"/>
</dbReference>
<dbReference type="SMART" id="SM01199">
    <property type="entry name" value="FDF"/>
    <property type="match status" value="1"/>
</dbReference>
<dbReference type="SMART" id="SM01271">
    <property type="entry name" value="LSM14"/>
    <property type="match status" value="1"/>
</dbReference>
<dbReference type="SUPFAM" id="SSF50182">
    <property type="entry name" value="Sm-like ribonucleoproteins"/>
    <property type="match status" value="1"/>
</dbReference>
<dbReference type="PROSITE" id="PS51512">
    <property type="entry name" value="DFDF"/>
    <property type="match status" value="1"/>
</dbReference>
<dbReference type="PROSITE" id="PS51513">
    <property type="entry name" value="FFD"/>
    <property type="match status" value="1"/>
</dbReference>
<dbReference type="PROSITE" id="PS52002">
    <property type="entry name" value="SM"/>
    <property type="match status" value="1"/>
</dbReference>
<dbReference type="PROSITE" id="PS51536">
    <property type="entry name" value="TFG"/>
    <property type="match status" value="1"/>
</dbReference>
<comment type="function">
    <text evidence="6">RNA-binding component of messenger ribonucleoprotein complexes (mRNPs), storage particles that mask maternal mRNAs from the translational apparatus during oocyte maturation (PubMed:17074753). Acts as a repressor of mRNA translation (PubMed:17074753). Probably involved in the storage of translationally inactive mRNAs in the cytoplasm in order to prevent their degradation (PubMed:17074753).</text>
</comment>
<comment type="subunit">
    <text evidence="6">Component of a ribonucleoprotein (RNP) complex, at least composed of lsm14a/rap55a, ybx2/frgy2, ddx6/Xp54 and eif4enif1/4E-T. Also forms a complex with prmt1 independently of ybx2/frgy2. Interacts with ddx6/Xp54 but does not appear to directly bind ybx2/frgy2. Different translationally-repressed mRNP complexes probably exist that contain either lsm14a/rap55a or lsm14b/rap55b depending on the developmental stage.</text>
</comment>
<comment type="subcellular location">
    <subcellularLocation>
        <location evidence="6">Cytoplasm</location>
    </subcellularLocation>
    <subcellularLocation>
        <location evidence="1">Cytoplasm</location>
        <location evidence="1">P-body</location>
    </subcellularLocation>
    <subcellularLocation>
        <location evidence="1">Cytoplasm</location>
        <location evidence="1">Stress granule</location>
    </subcellularLocation>
    <text evidence="6">Localizes to cytoplasmic particles in stage VI oocytes and eggs.</text>
</comment>
<comment type="developmental stage">
    <text evidence="6 7 8">Expressed both maternally and zygotically. Expression increases during oocyte growth and continues at a constant level until the tailbud stage (at protein level).</text>
</comment>
<comment type="domain">
    <text evidence="6">The RGG repeats are required for interaction with ddx6/Xp54 and accumulation in ribonucleoprotein complexes.</text>
</comment>
<comment type="PTM">
    <text evidence="6">Phosphorylated.</text>
</comment>
<comment type="similarity">
    <text evidence="2">Belongs to the LSM14 family.</text>
</comment>
<comment type="caution">
    <text evidence="13">In contrast to PubMed:17074753, PubMed:9851867 show a strictly maternal expression that decreases progressively during oocyte maturation and early cleavage stages. This is more similar to the expression pattern of lsm14b/rap55b.</text>
</comment>
<accession>A0A8M2</accession>
<accession>Q68F15</accession>
<sequence length="471" mass="51168">MSGGTPYIGSKISLISKAEIRYEGILYTIDTENSTVALAKVRSFGTEDRPTDRPIPPRDEIFEYIIFRGSDIKDLTVCEPPKPQCSLPQDPAIVQSSLGSSSASSFQSVSSYGPFGRMPAYSQFNTGPLVGPQFGAVGVGSSLTSFGAETTSSTSLPPSSAVGTSFTQEARTLKTQSSQGQSSSPLDSLRKSPNIEQAVQTAAAPHAPSTATVGRRSPVLSRPVPSSIQKTAESPEQRKGELHKMQRPDIDQLKNDKNDPSKRQPVLSALQPRRGRGGNRGGRGRFGVRRDGPMKFEKDFDFESANAQFNKEEIDREFHNKLKIKDDKPEKPVNGEDKTDSVVDTQNSEGNAEEEEVLAGGVCYYDKTKSFFDNISCDDNRDRRQTWAEERRINVETFGLPLRSNRGRGGFRGRGGGMGFRGGRGRGGERRGAPGGGGFGPARGFRGGFRGGRGGREFADYEYRKDNKVAA</sequence>
<reference evidence="13 15" key="1">
    <citation type="journal article" date="2006" name="J. Biol. Chem.">
        <title>RAP55, a cytoplasmic mRNP component, represses translation in Xenopus oocytes.</title>
        <authorList>
            <person name="Tanaka K.J."/>
            <person name="Ogawa K."/>
            <person name="Takagi M."/>
            <person name="Imamoto N."/>
            <person name="Matsumoto K."/>
            <person name="Tsujimoto M."/>
        </authorList>
    </citation>
    <scope>NUCLEOTIDE SEQUENCE [MRNA]</scope>
    <scope>FUNCTION</scope>
    <scope>IDENTIFICATION IN A RIBONUCLEOPROTEIN COMPLEX WITH YBX2; DDX6 AND EIF4ENIF1</scope>
    <scope>IDENTIFICATION IN A COMPLEX WITH PRMT1</scope>
    <scope>INTERACTION WITH DDX6</scope>
    <scope>SUBCELLULAR LOCATION</scope>
    <scope>DEVELOPMENTAL STAGE</scope>
    <scope>DOMAIN</scope>
    <scope>PHOSPHORYLATION</scope>
    <source>
        <tissue evidence="6">Oocyte</tissue>
    </source>
</reference>
<reference evidence="14" key="2">
    <citation type="submission" date="2004-08" db="EMBL/GenBank/DDBJ databases">
        <authorList>
            <consortium name="NIH - Xenopus Gene Collection (XGC) project"/>
        </authorList>
    </citation>
    <scope>NUCLEOTIDE SEQUENCE [LARGE SCALE MRNA]</scope>
    <source>
        <tissue evidence="14">Tail bud</tissue>
    </source>
</reference>
<reference evidence="13" key="3">
    <citation type="journal article" date="1998" name="Exp. Cell Res.">
        <title>Identification of a novel mRNA-associated protein in oocytes of Pleurodeles waltl and Xenopus laevis.</title>
        <authorList>
            <person name="Lieb B."/>
            <person name="Carl M."/>
            <person name="Hock R."/>
            <person name="Gebauer D."/>
            <person name="Scheer U."/>
        </authorList>
    </citation>
    <scope>DEVELOPMENTAL STAGE</scope>
</reference>
<reference evidence="13" key="4">
    <citation type="journal article" date="2007" name="J. Biol. Chem.">
        <title>CPEB interacts with an ovary-specific eIF4E and 4E-T in early Xenopus oocytes.</title>
        <authorList>
            <person name="Minshall N."/>
            <person name="Reiter M.H."/>
            <person name="Weil D."/>
            <person name="Standart N."/>
        </authorList>
    </citation>
    <scope>DEVELOPMENTAL STAGE</scope>
</reference>
<reference evidence="13" key="5">
    <citation type="journal article" date="2009" name="Int. J. Biochem. Cell Biol.">
        <title>RAP55: insights into an evolutionarily conserved protein family.</title>
        <authorList>
            <person name="Marnef A."/>
            <person name="Sommerville J."/>
            <person name="Ladomery M.R."/>
        </authorList>
    </citation>
    <scope>REVIEW</scope>
</reference>
<evidence type="ECO:0000250" key="1">
    <source>
        <dbReference type="UniProtKB" id="Q8ND56"/>
    </source>
</evidence>
<evidence type="ECO:0000255" key="2"/>
<evidence type="ECO:0000255" key="3">
    <source>
        <dbReference type="PROSITE-ProRule" id="PRU00845"/>
    </source>
</evidence>
<evidence type="ECO:0000255" key="4">
    <source>
        <dbReference type="PROSITE-ProRule" id="PRU01346"/>
    </source>
</evidence>
<evidence type="ECO:0000256" key="5">
    <source>
        <dbReference type="SAM" id="MobiDB-lite"/>
    </source>
</evidence>
<evidence type="ECO:0000269" key="6">
    <source>
    </source>
</evidence>
<evidence type="ECO:0000269" key="7">
    <source>
    </source>
</evidence>
<evidence type="ECO:0000269" key="8">
    <source>
    </source>
</evidence>
<evidence type="ECO:0000303" key="9">
    <source>
    </source>
</evidence>
<evidence type="ECO:0000303" key="10">
    <source>
    </source>
</evidence>
<evidence type="ECO:0000303" key="11">
    <source>
    </source>
</evidence>
<evidence type="ECO:0000303" key="12">
    <source>
    </source>
</evidence>
<evidence type="ECO:0000305" key="13"/>
<evidence type="ECO:0000312" key="14">
    <source>
        <dbReference type="EMBL" id="AAH80031.1"/>
    </source>
</evidence>
<evidence type="ECO:0000312" key="15">
    <source>
        <dbReference type="EMBL" id="BAF36055.1"/>
    </source>
</evidence>
<protein>
    <recommendedName>
        <fullName>Protein LSM14 homolog A-A</fullName>
    </recommendedName>
    <alternativeName>
        <fullName>RNA-associated protein 55A-A</fullName>
        <shortName>RAP55A-A</shortName>
        <shortName evidence="9 12">xRAP55</shortName>
        <shortName evidence="10 11">xRAP55A</shortName>
    </alternativeName>
</protein>
<organism>
    <name type="scientific">Xenopus laevis</name>
    <name type="common">African clawed frog</name>
    <dbReference type="NCBI Taxonomy" id="8355"/>
    <lineage>
        <taxon>Eukaryota</taxon>
        <taxon>Metazoa</taxon>
        <taxon>Chordata</taxon>
        <taxon>Craniata</taxon>
        <taxon>Vertebrata</taxon>
        <taxon>Euteleostomi</taxon>
        <taxon>Amphibia</taxon>
        <taxon>Batrachia</taxon>
        <taxon>Anura</taxon>
        <taxon>Pipoidea</taxon>
        <taxon>Pipidae</taxon>
        <taxon>Xenopodinae</taxon>
        <taxon>Xenopus</taxon>
        <taxon>Xenopus</taxon>
    </lineage>
</organism>